<reference key="1">
    <citation type="journal article" date="1999" name="Plant Cell">
        <title>Regional expression of the rice KN1-type homeobox gene family during embryo, shoot, and flower development.</title>
        <authorList>
            <person name="Sentoku N."/>
            <person name="Sato Y."/>
            <person name="Kurata N."/>
            <person name="Ito Y."/>
            <person name="Kitano H."/>
            <person name="Matsuoka M."/>
        </authorList>
    </citation>
    <scope>NUCLEOTIDE SEQUENCE [MRNA] (ISOFORM 2)</scope>
    <scope>FUNCTION</scope>
    <scope>DEVELOPMENTAL STAGE</scope>
    <source>
        <strain>cv. Nipponbare</strain>
        <tissue>Embryo</tissue>
    </source>
</reference>
<reference key="2">
    <citation type="submission" date="2001-09" db="EMBL/GenBank/DDBJ databases">
        <title>Evidence for the selection at KNOTTED1-like homobox gene, OSH3, locus in rice.</title>
        <authorList>
            <person name="Sato Y."/>
            <person name="Fukuda Y."/>
            <person name="Hirano H."/>
        </authorList>
    </citation>
    <scope>NUCLEOTIDE SEQUENCE [MRNA] (ISOFORM 1)</scope>
    <source>
        <strain>cv. Nipponbare</strain>
    </source>
</reference>
<reference key="3">
    <citation type="journal article" date="2005" name="Genome Res.">
        <title>Sequence, annotation, and analysis of synteny between rice chromosome 3 and diverged grass species.</title>
        <authorList>
            <consortium name="The rice chromosome 3 sequencing consortium"/>
            <person name="Buell C.R."/>
            <person name="Yuan Q."/>
            <person name="Ouyang S."/>
            <person name="Liu J."/>
            <person name="Zhu W."/>
            <person name="Wang A."/>
            <person name="Maiti R."/>
            <person name="Haas B."/>
            <person name="Wortman J."/>
            <person name="Pertea M."/>
            <person name="Jones K.M."/>
            <person name="Kim M."/>
            <person name="Overton L."/>
            <person name="Tsitrin T."/>
            <person name="Fadrosh D."/>
            <person name="Bera J."/>
            <person name="Weaver B."/>
            <person name="Jin S."/>
            <person name="Johri S."/>
            <person name="Reardon M."/>
            <person name="Webb K."/>
            <person name="Hill J."/>
            <person name="Moffat K."/>
            <person name="Tallon L."/>
            <person name="Van Aken S."/>
            <person name="Lewis M."/>
            <person name="Utterback T."/>
            <person name="Feldblyum T."/>
            <person name="Zismann V."/>
            <person name="Iobst S."/>
            <person name="Hsiao J."/>
            <person name="de Vazeille A.R."/>
            <person name="Salzberg S.L."/>
            <person name="White O."/>
            <person name="Fraser C.M."/>
            <person name="Yu Y."/>
            <person name="Kim H."/>
            <person name="Rambo T."/>
            <person name="Currie J."/>
            <person name="Collura K."/>
            <person name="Kernodle-Thompson S."/>
            <person name="Wei F."/>
            <person name="Kudrna K."/>
            <person name="Ammiraju J.S.S."/>
            <person name="Luo M."/>
            <person name="Goicoechea J.L."/>
            <person name="Wing R.A."/>
            <person name="Henry D."/>
            <person name="Oates R."/>
            <person name="Palmer M."/>
            <person name="Pries G."/>
            <person name="Saski C."/>
            <person name="Simmons J."/>
            <person name="Soderlund C."/>
            <person name="Nelson W."/>
            <person name="de la Bastide M."/>
            <person name="Spiegel L."/>
            <person name="Nascimento L."/>
            <person name="Huang E."/>
            <person name="Preston R."/>
            <person name="Zutavern T."/>
            <person name="Palmer L."/>
            <person name="O'Shaughnessy A."/>
            <person name="Dike S."/>
            <person name="McCombie W.R."/>
            <person name="Minx P."/>
            <person name="Cordum H."/>
            <person name="Wilson R."/>
            <person name="Jin W."/>
            <person name="Lee H.R."/>
            <person name="Jiang J."/>
            <person name="Jackson S."/>
        </authorList>
    </citation>
    <scope>NUCLEOTIDE SEQUENCE [LARGE SCALE GENOMIC DNA]</scope>
    <source>
        <strain>cv. Nipponbare</strain>
    </source>
</reference>
<reference key="4">
    <citation type="journal article" date="2005" name="Nature">
        <title>The map-based sequence of the rice genome.</title>
        <authorList>
            <consortium name="International rice genome sequencing project (IRGSP)"/>
        </authorList>
    </citation>
    <scope>NUCLEOTIDE SEQUENCE [LARGE SCALE GENOMIC DNA]</scope>
    <source>
        <strain>cv. Nipponbare</strain>
    </source>
</reference>
<reference key="5">
    <citation type="journal article" date="2008" name="Nucleic Acids Res.">
        <title>The rice annotation project database (RAP-DB): 2008 update.</title>
        <authorList>
            <consortium name="The rice annotation project (RAP)"/>
        </authorList>
    </citation>
    <scope>GENOME REANNOTATION</scope>
    <source>
        <strain>cv. Nipponbare</strain>
    </source>
</reference>
<reference key="6">
    <citation type="journal article" date="2013" name="Rice">
        <title>Improvement of the Oryza sativa Nipponbare reference genome using next generation sequence and optical map data.</title>
        <authorList>
            <person name="Kawahara Y."/>
            <person name="de la Bastide M."/>
            <person name="Hamilton J.P."/>
            <person name="Kanamori H."/>
            <person name="McCombie W.R."/>
            <person name="Ouyang S."/>
            <person name="Schwartz D.C."/>
            <person name="Tanaka T."/>
            <person name="Wu J."/>
            <person name="Zhou S."/>
            <person name="Childs K.L."/>
            <person name="Davidson R.M."/>
            <person name="Lin H."/>
            <person name="Quesada-Ocampo L."/>
            <person name="Vaillancourt B."/>
            <person name="Sakai H."/>
            <person name="Lee S.S."/>
            <person name="Kim J."/>
            <person name="Numa H."/>
            <person name="Itoh T."/>
            <person name="Buell C.R."/>
            <person name="Matsumoto T."/>
        </authorList>
    </citation>
    <scope>GENOME REANNOTATION</scope>
    <source>
        <strain>cv. Nipponbare</strain>
    </source>
</reference>
<reference key="7">
    <citation type="journal article" date="1999" name="Biochim. Biophys. Acta">
        <title>Expression of novel homeobox genes in early embryogenesis in rice.</title>
        <authorList>
            <person name="Ito Y."/>
            <person name="Eiguchi M."/>
            <person name="Kurata N."/>
        </authorList>
    </citation>
    <scope>NUCLEOTIDE SEQUENCE [MRNA] OF 144-365</scope>
    <scope>DEVELOPMENTAL STAGE</scope>
    <source>
        <strain>cv. Nipponbare</strain>
        <tissue>Embryo</tissue>
    </source>
</reference>
<reference key="8">
    <citation type="journal article" date="2008" name="FEBS J.">
        <title>Genome-wide identification, classification, evolutionary expansion and expression analyses of homeobox genes in rice.</title>
        <authorList>
            <person name="Jain M."/>
            <person name="Tyagi A.K."/>
            <person name="Khurana J.P."/>
        </authorList>
    </citation>
    <scope>GENE FAMILY</scope>
    <scope>NOMENCLATURE</scope>
</reference>
<dbReference type="EMBL" id="AB028882">
    <property type="protein sequence ID" value="BAA79223.1"/>
    <property type="status" value="ALT_FRAME"/>
    <property type="molecule type" value="mRNA"/>
</dbReference>
<dbReference type="EMBL" id="AB071663">
    <property type="protein sequence ID" value="BAB68309.1"/>
    <property type="molecule type" value="mRNA"/>
</dbReference>
<dbReference type="EMBL" id="AC145380">
    <property type="protein sequence ID" value="AAS07153.1"/>
    <property type="molecule type" value="Genomic_DNA"/>
</dbReference>
<dbReference type="EMBL" id="DP000009">
    <property type="protein sequence ID" value="ABF98655.1"/>
    <property type="molecule type" value="Genomic_DNA"/>
</dbReference>
<dbReference type="EMBL" id="AP008209">
    <property type="protein sequence ID" value="BAF13055.1"/>
    <property type="molecule type" value="Genomic_DNA"/>
</dbReference>
<dbReference type="EMBL" id="AP014959">
    <property type="protein sequence ID" value="BAS86186.1"/>
    <property type="molecule type" value="Genomic_DNA"/>
</dbReference>
<dbReference type="EMBL" id="AB007625">
    <property type="protein sequence ID" value="BAA77819.1"/>
    <property type="molecule type" value="mRNA"/>
</dbReference>
<dbReference type="RefSeq" id="XP_015628822.1">
    <property type="nucleotide sequence ID" value="XM_015773336.1"/>
</dbReference>
<dbReference type="SMR" id="Q948L5"/>
<dbReference type="FunCoup" id="Q948L5">
    <property type="interactions" value="244"/>
</dbReference>
<dbReference type="STRING" id="39947.Q948L5"/>
<dbReference type="PaxDb" id="39947-Q948L5"/>
<dbReference type="EnsemblPlants" id="Os03t0727200-01">
    <molecule id="Q948L5-1"/>
    <property type="protein sequence ID" value="Os03t0727200-01"/>
    <property type="gene ID" value="Os03g0727200"/>
</dbReference>
<dbReference type="Gramene" id="Os03t0727200-01">
    <molecule id="Q948L5-1"/>
    <property type="protein sequence ID" value="Os03t0727200-01"/>
    <property type="gene ID" value="Os03g0727200"/>
</dbReference>
<dbReference type="KEGG" id="dosa:Os03g0727200"/>
<dbReference type="eggNOG" id="KOG0773">
    <property type="taxonomic scope" value="Eukaryota"/>
</dbReference>
<dbReference type="HOGENOM" id="CLU_040111_0_1_1"/>
<dbReference type="InParanoid" id="Q948L5"/>
<dbReference type="OMA" id="GMEMMEA"/>
<dbReference type="OrthoDB" id="10056939at2759"/>
<dbReference type="Proteomes" id="UP000000763">
    <property type="component" value="Chromosome 3"/>
</dbReference>
<dbReference type="Proteomes" id="UP000059680">
    <property type="component" value="Chromosome 3"/>
</dbReference>
<dbReference type="GO" id="GO:0005634">
    <property type="term" value="C:nucleus"/>
    <property type="evidence" value="ECO:0000318"/>
    <property type="project" value="GO_Central"/>
</dbReference>
<dbReference type="GO" id="GO:0003677">
    <property type="term" value="F:DNA binding"/>
    <property type="evidence" value="ECO:0007669"/>
    <property type="project" value="UniProtKB-KW"/>
</dbReference>
<dbReference type="GO" id="GO:0006355">
    <property type="term" value="P:regulation of DNA-templated transcription"/>
    <property type="evidence" value="ECO:0007669"/>
    <property type="project" value="InterPro"/>
</dbReference>
<dbReference type="CDD" id="cd00086">
    <property type="entry name" value="homeodomain"/>
    <property type="match status" value="1"/>
</dbReference>
<dbReference type="Gene3D" id="1.10.10.60">
    <property type="entry name" value="Homeodomain-like"/>
    <property type="match status" value="1"/>
</dbReference>
<dbReference type="InterPro" id="IPR005539">
    <property type="entry name" value="ELK_dom"/>
</dbReference>
<dbReference type="InterPro" id="IPR001356">
    <property type="entry name" value="HD"/>
</dbReference>
<dbReference type="InterPro" id="IPR009057">
    <property type="entry name" value="Homeodomain-like_sf"/>
</dbReference>
<dbReference type="InterPro" id="IPR008422">
    <property type="entry name" value="KN_HD"/>
</dbReference>
<dbReference type="InterPro" id="IPR005540">
    <property type="entry name" value="KNOX1"/>
</dbReference>
<dbReference type="InterPro" id="IPR005541">
    <property type="entry name" value="KNOX2"/>
</dbReference>
<dbReference type="InterPro" id="IPR050224">
    <property type="entry name" value="TALE_homeobox"/>
</dbReference>
<dbReference type="PANTHER" id="PTHR11850">
    <property type="entry name" value="HOMEOBOX PROTEIN TRANSCRIPTION FACTORS"/>
    <property type="match status" value="1"/>
</dbReference>
<dbReference type="Pfam" id="PF03789">
    <property type="entry name" value="ELK"/>
    <property type="match status" value="1"/>
</dbReference>
<dbReference type="Pfam" id="PF05920">
    <property type="entry name" value="Homeobox_KN"/>
    <property type="match status" value="1"/>
</dbReference>
<dbReference type="Pfam" id="PF03790">
    <property type="entry name" value="KNOX1"/>
    <property type="match status" value="1"/>
</dbReference>
<dbReference type="Pfam" id="PF03791">
    <property type="entry name" value="KNOX2"/>
    <property type="match status" value="1"/>
</dbReference>
<dbReference type="SMART" id="SM01188">
    <property type="entry name" value="ELK"/>
    <property type="match status" value="2"/>
</dbReference>
<dbReference type="SMART" id="SM00389">
    <property type="entry name" value="HOX"/>
    <property type="match status" value="1"/>
</dbReference>
<dbReference type="SMART" id="SM01255">
    <property type="entry name" value="KNOX1"/>
    <property type="match status" value="1"/>
</dbReference>
<dbReference type="SMART" id="SM01256">
    <property type="entry name" value="KNOX2"/>
    <property type="match status" value="1"/>
</dbReference>
<dbReference type="SUPFAM" id="SSF46689">
    <property type="entry name" value="Homeodomain-like"/>
    <property type="match status" value="1"/>
</dbReference>
<dbReference type="PROSITE" id="PS51213">
    <property type="entry name" value="ELK"/>
    <property type="match status" value="1"/>
</dbReference>
<dbReference type="PROSITE" id="PS50071">
    <property type="entry name" value="HOMEOBOX_2"/>
    <property type="match status" value="1"/>
</dbReference>
<comment type="function">
    <text evidence="5">Probable transcription factor that may be involved in shoot formation during embryogenesis.</text>
</comment>
<comment type="subcellular location">
    <subcellularLocation>
        <location evidence="1 2">Nucleus</location>
    </subcellularLocation>
</comment>
<comment type="alternative products">
    <event type="alternative splicing"/>
    <isoform>
        <id>Q948L5-1</id>
        <name>1</name>
        <sequence type="displayed"/>
    </isoform>
    <isoform>
        <id>Q948L5-2</id>
        <name>2</name>
        <sequence type="described" ref="VSP_036182"/>
    </isoform>
</comment>
<comment type="developmental stage">
    <text evidence="4 5">Highly expressed in the early globular stage embryo before 2 days after pollination (DAP), as well as in the endosperm. At 3 DAP, expression is down-regulated in the central region and in the center of the ventral region of the embryo, where the shoot subsequently forms, but weakly expressed in other regions until 4 DAP, and then disappears after 4 DAP. During transition between the inflorescence and floral phases, expressed in the inflorescence meristems but not in the floral meristem.</text>
</comment>
<comment type="similarity">
    <text evidence="2">Belongs to the TALE/KNOX homeobox family.</text>
</comment>
<comment type="sequence caution" evidence="7">
    <conflict type="frameshift">
        <sequence resource="EMBL-CDS" id="BAA79223"/>
    </conflict>
</comment>
<name>KNOS7_ORYSJ</name>
<gene>
    <name type="primary">OSH3</name>
    <name type="synonym">HOS13</name>
    <name type="ordered locus">Os03g0727200</name>
    <name type="ordered locus">LOC_Os03g51710</name>
    <name type="ORF">OSJNBa0013A09.3</name>
</gene>
<evidence type="ECO:0000255" key="1">
    <source>
        <dbReference type="PROSITE-ProRule" id="PRU00108"/>
    </source>
</evidence>
<evidence type="ECO:0000255" key="2">
    <source>
        <dbReference type="PROSITE-ProRule" id="PRU00559"/>
    </source>
</evidence>
<evidence type="ECO:0000256" key="3">
    <source>
        <dbReference type="SAM" id="MobiDB-lite"/>
    </source>
</evidence>
<evidence type="ECO:0000269" key="4">
    <source>
    </source>
</evidence>
<evidence type="ECO:0000269" key="5">
    <source>
    </source>
</evidence>
<evidence type="ECO:0000303" key="6">
    <source>
    </source>
</evidence>
<evidence type="ECO:0000305" key="7"/>
<feature type="chain" id="PRO_0000360009" description="Homeobox protein knotted-1-like 7">
    <location>
        <begin position="1"/>
        <end position="365"/>
    </location>
</feature>
<feature type="domain" description="ELK" evidence="2">
    <location>
        <begin position="227"/>
        <end position="247"/>
    </location>
</feature>
<feature type="DNA-binding region" description="Homeobox; TALE-type" evidence="1">
    <location>
        <begin position="248"/>
        <end position="311"/>
    </location>
</feature>
<feature type="region of interest" description="Disordered" evidence="3">
    <location>
        <begin position="1"/>
        <end position="20"/>
    </location>
</feature>
<feature type="compositionally biased region" description="Basic and acidic residues" evidence="3">
    <location>
        <begin position="1"/>
        <end position="11"/>
    </location>
</feature>
<feature type="splice variant" id="VSP_036182" description="In isoform 2." evidence="6">
    <original>DQFM</original>
    <variation>KLVT</variation>
    <location>
        <begin position="136"/>
        <end position="139"/>
    </location>
</feature>
<feature type="sequence conflict" description="In Ref. 1; BAA79223." evidence="7" ref="1">
    <original>L</original>
    <variation>LEL</variation>
    <location>
        <position position="171"/>
    </location>
</feature>
<organism>
    <name type="scientific">Oryza sativa subsp. japonica</name>
    <name type="common">Rice</name>
    <dbReference type="NCBI Taxonomy" id="39947"/>
    <lineage>
        <taxon>Eukaryota</taxon>
        <taxon>Viridiplantae</taxon>
        <taxon>Streptophyta</taxon>
        <taxon>Embryophyta</taxon>
        <taxon>Tracheophyta</taxon>
        <taxon>Spermatophyta</taxon>
        <taxon>Magnoliopsida</taxon>
        <taxon>Liliopsida</taxon>
        <taxon>Poales</taxon>
        <taxon>Poaceae</taxon>
        <taxon>BOP clade</taxon>
        <taxon>Oryzoideae</taxon>
        <taxon>Oryzeae</taxon>
        <taxon>Oryzinae</taxon>
        <taxon>Oryza</taxon>
        <taxon>Oryza sativa</taxon>
    </lineage>
</organism>
<proteinExistence type="evidence at transcript level"/>
<keyword id="KW-0025">Alternative splicing</keyword>
<keyword id="KW-0238">DNA-binding</keyword>
<keyword id="KW-0371">Homeobox</keyword>
<keyword id="KW-0539">Nucleus</keyword>
<keyword id="KW-1185">Reference proteome</keyword>
<sequence length="365" mass="40037">MEELEGHRGEGRLPPPPPLLPFPKVSVQVYTVPSSSTAASAAAAGGARQAVAPATRDGGDGGGRAAGVLDDPVKARIVSHPRYHRLLAAFLDCHKVGCPAEAAEEIAAAARVREARQRAAAAASRMPPAPEDPELDQFMEDYCKLLVECKEELSRPLQEAEEFLRTVESELNSINSGPPLTALISESKAGLDSSDDDEHEDGSGMEMMEAAEDEDLGIIDPRSDDKALKRHLLRKYSGYLGGLRKELSKKRKKGKLPKEARQKLLTWWELHYRWPNPSEMEKIALAESTGLEQKQINNCFINQRKRHWKPTEEMEFAVMEAYHHQSTDAAAAFYVDVDARLVGATAAAPASAVYTARPDHGVWRA</sequence>
<protein>
    <recommendedName>
        <fullName>Homeobox protein knotted-1-like 7</fullName>
    </recommendedName>
    <alternativeName>
        <fullName>Homeobox protein HOS13</fullName>
    </alternativeName>
    <alternativeName>
        <fullName>Homeobox protein OSH3</fullName>
    </alternativeName>
</protein>
<accession>Q948L5</accession>
<accession>Q0DNY3</accession>
<accession>Q9SXM7</accession>
<accession>Q9XIV7</accession>